<keyword id="KW-1003">Cell membrane</keyword>
<keyword id="KW-0472">Membrane</keyword>
<keyword id="KW-0812">Transmembrane</keyword>
<keyword id="KW-1133">Transmembrane helix</keyword>
<protein>
    <recommendedName>
        <fullName evidence="1">UPF0370 protein YpfN</fullName>
    </recommendedName>
</protein>
<accession>Q0TF04</accession>
<comment type="subcellular location">
    <subcellularLocation>
        <location evidence="1">Cell membrane</location>
        <topology evidence="1">Single-pass membrane protein</topology>
    </subcellularLocation>
</comment>
<comment type="similarity">
    <text evidence="1">Belongs to the UPF0370 family.</text>
</comment>
<reference key="1">
    <citation type="journal article" date="2006" name="Mol. Microbiol.">
        <title>Role of pathogenicity island-associated integrases in the genome plasticity of uropathogenic Escherichia coli strain 536.</title>
        <authorList>
            <person name="Hochhut B."/>
            <person name="Wilde C."/>
            <person name="Balling G."/>
            <person name="Middendorf B."/>
            <person name="Dobrindt U."/>
            <person name="Brzuszkiewicz E."/>
            <person name="Gottschalk G."/>
            <person name="Carniel E."/>
            <person name="Hacker J."/>
        </authorList>
    </citation>
    <scope>NUCLEOTIDE SEQUENCE [LARGE SCALE GENOMIC DNA]</scope>
    <source>
        <strain>536 / UPEC</strain>
    </source>
</reference>
<organism>
    <name type="scientific">Escherichia coli O6:K15:H31 (strain 536 / UPEC)</name>
    <dbReference type="NCBI Taxonomy" id="362663"/>
    <lineage>
        <taxon>Bacteria</taxon>
        <taxon>Pseudomonadati</taxon>
        <taxon>Pseudomonadota</taxon>
        <taxon>Gammaproteobacteria</taxon>
        <taxon>Enterobacterales</taxon>
        <taxon>Enterobacteriaceae</taxon>
        <taxon>Escherichia</taxon>
    </lineage>
</organism>
<feature type="chain" id="PRO_1000069082" description="UPF0370 protein YpfN">
    <location>
        <begin position="1"/>
        <end position="66"/>
    </location>
</feature>
<feature type="transmembrane region" description="Helical" evidence="1">
    <location>
        <begin position="4"/>
        <end position="24"/>
    </location>
</feature>
<feature type="region of interest" description="Disordered" evidence="2">
    <location>
        <begin position="39"/>
        <end position="66"/>
    </location>
</feature>
<feature type="compositionally biased region" description="Basic and acidic residues" evidence="2">
    <location>
        <begin position="42"/>
        <end position="51"/>
    </location>
</feature>
<name>YPFN_ECOL5</name>
<evidence type="ECO:0000255" key="1">
    <source>
        <dbReference type="HAMAP-Rule" id="MF_01566"/>
    </source>
</evidence>
<evidence type="ECO:0000256" key="2">
    <source>
        <dbReference type="SAM" id="MobiDB-lite"/>
    </source>
</evidence>
<proteinExistence type="inferred from homology"/>
<dbReference type="EMBL" id="CP000247">
    <property type="protein sequence ID" value="ABG70475.1"/>
    <property type="molecule type" value="Genomic_DNA"/>
</dbReference>
<dbReference type="RefSeq" id="WP_000383836.1">
    <property type="nucleotide sequence ID" value="NC_008253.1"/>
</dbReference>
<dbReference type="SMR" id="Q0TF04"/>
<dbReference type="KEGG" id="ecp:ECP_2486"/>
<dbReference type="HOGENOM" id="CLU_198936_0_0_6"/>
<dbReference type="Proteomes" id="UP000009182">
    <property type="component" value="Chromosome"/>
</dbReference>
<dbReference type="GO" id="GO:0005886">
    <property type="term" value="C:plasma membrane"/>
    <property type="evidence" value="ECO:0007669"/>
    <property type="project" value="UniProtKB-SubCell"/>
</dbReference>
<dbReference type="HAMAP" id="MF_01566">
    <property type="entry name" value="UPF0370"/>
    <property type="match status" value="1"/>
</dbReference>
<dbReference type="InterPro" id="IPR020910">
    <property type="entry name" value="UPF0370"/>
</dbReference>
<dbReference type="NCBIfam" id="NF010185">
    <property type="entry name" value="PRK13664.1"/>
    <property type="match status" value="1"/>
</dbReference>
<dbReference type="Pfam" id="PF13980">
    <property type="entry name" value="UPF0370"/>
    <property type="match status" value="1"/>
</dbReference>
<gene>
    <name evidence="1" type="primary">ypfN</name>
    <name type="ordered locus">ECP_2486</name>
</gene>
<sequence>MDWLAKYWWILVIVFLVGVLLNVIKDLKRVDHKKFLANKPELPPHRDFNDKWDDDDDWPKKDQPKK</sequence>